<keyword id="KW-0903">Direct protein sequencing</keyword>
<keyword id="KW-0249">Electron transport</keyword>
<keyword id="KW-0349">Heme</keyword>
<keyword id="KW-0408">Iron</keyword>
<keyword id="KW-0479">Metal-binding</keyword>
<keyword id="KW-0574">Periplasm</keyword>
<keyword id="KW-0602">Photosynthesis</keyword>
<keyword id="KW-0873">Pyrrolidone carboxylic acid</keyword>
<keyword id="KW-1185">Reference proteome</keyword>
<keyword id="KW-0732">Signal</keyword>
<keyword id="KW-0813">Transport</keyword>
<dbReference type="EMBL" id="M14501">
    <property type="protein sequence ID" value="AAA26101.1"/>
    <property type="molecule type" value="Genomic_DNA"/>
</dbReference>
<dbReference type="EMBL" id="M64777">
    <property type="protein sequence ID" value="AAA26099.1"/>
    <property type="molecule type" value="Genomic_DNA"/>
</dbReference>
<dbReference type="EMBL" id="AF195122">
    <property type="protein sequence ID" value="AAF24264.1"/>
    <property type="molecule type" value="Genomic_DNA"/>
</dbReference>
<dbReference type="EMBL" id="CP000143">
    <property type="protein sequence ID" value="ABA79470.1"/>
    <property type="molecule type" value="Genomic_DNA"/>
</dbReference>
<dbReference type="PIR" id="A38896">
    <property type="entry name" value="CCRF2S"/>
</dbReference>
<dbReference type="RefSeq" id="WP_002720461.1">
    <property type="nucleotide sequence ID" value="NZ_CP030271.1"/>
</dbReference>
<dbReference type="RefSeq" id="YP_353371.1">
    <property type="nucleotide sequence ID" value="NC_007493.2"/>
</dbReference>
<dbReference type="SMR" id="Q3J164"/>
<dbReference type="STRING" id="272943.RSP_0296"/>
<dbReference type="MetOSite" id="Q3J164"/>
<dbReference type="EnsemblBacteria" id="ABA79470">
    <property type="protein sequence ID" value="ABA79470"/>
    <property type="gene ID" value="RSP_0296"/>
</dbReference>
<dbReference type="GeneID" id="3719209"/>
<dbReference type="KEGG" id="rsp:RSP_0296"/>
<dbReference type="PATRIC" id="fig|272943.9.peg.2241"/>
<dbReference type="eggNOG" id="COG3474">
    <property type="taxonomic scope" value="Bacteria"/>
</dbReference>
<dbReference type="OrthoDB" id="9805828at2"/>
<dbReference type="PhylomeDB" id="Q3J164"/>
<dbReference type="Proteomes" id="UP000002703">
    <property type="component" value="Chromosome 1"/>
</dbReference>
<dbReference type="GO" id="GO:0042597">
    <property type="term" value="C:periplasmic space"/>
    <property type="evidence" value="ECO:0007669"/>
    <property type="project" value="UniProtKB-SubCell"/>
</dbReference>
<dbReference type="GO" id="GO:0009055">
    <property type="term" value="F:electron transfer activity"/>
    <property type="evidence" value="ECO:0007669"/>
    <property type="project" value="InterPro"/>
</dbReference>
<dbReference type="GO" id="GO:0020037">
    <property type="term" value="F:heme binding"/>
    <property type="evidence" value="ECO:0007669"/>
    <property type="project" value="InterPro"/>
</dbReference>
<dbReference type="GO" id="GO:0046872">
    <property type="term" value="F:metal ion binding"/>
    <property type="evidence" value="ECO:0007669"/>
    <property type="project" value="UniProtKB-KW"/>
</dbReference>
<dbReference type="GO" id="GO:0015979">
    <property type="term" value="P:photosynthesis"/>
    <property type="evidence" value="ECO:0007669"/>
    <property type="project" value="UniProtKB-KW"/>
</dbReference>
<dbReference type="Gene3D" id="1.10.760.10">
    <property type="entry name" value="Cytochrome c-like domain"/>
    <property type="match status" value="1"/>
</dbReference>
<dbReference type="InterPro" id="IPR009056">
    <property type="entry name" value="Cyt_c-like_dom"/>
</dbReference>
<dbReference type="InterPro" id="IPR036909">
    <property type="entry name" value="Cyt_c-like_dom_sf"/>
</dbReference>
<dbReference type="InterPro" id="IPR002327">
    <property type="entry name" value="Cyt_c_1A/1B"/>
</dbReference>
<dbReference type="PANTHER" id="PTHR11961">
    <property type="entry name" value="CYTOCHROME C"/>
    <property type="match status" value="1"/>
</dbReference>
<dbReference type="SUPFAM" id="SSF46626">
    <property type="entry name" value="Cytochrome c"/>
    <property type="match status" value="1"/>
</dbReference>
<dbReference type="PROSITE" id="PS51007">
    <property type="entry name" value="CYTC"/>
    <property type="match status" value="1"/>
</dbReference>
<feature type="signal peptide" evidence="3 4">
    <location>
        <begin position="1"/>
        <end position="21"/>
    </location>
</feature>
<feature type="chain" id="PRO_0000006499" description="Cytochrome c2">
    <location>
        <begin position="22"/>
        <end position="145"/>
    </location>
</feature>
<feature type="binding site" description="covalent" evidence="2">
    <location>
        <position position="36"/>
    </location>
    <ligand>
        <name>heme c</name>
        <dbReference type="ChEBI" id="CHEBI:61717"/>
    </ligand>
</feature>
<feature type="binding site" description="covalent" evidence="2">
    <location>
        <position position="39"/>
    </location>
    <ligand>
        <name>heme c</name>
        <dbReference type="ChEBI" id="CHEBI:61717"/>
    </ligand>
</feature>
<feature type="binding site" description="axial binding residue" evidence="2">
    <location>
        <position position="40"/>
    </location>
    <ligand>
        <name>heme c</name>
        <dbReference type="ChEBI" id="CHEBI:61717"/>
    </ligand>
    <ligandPart>
        <name>Fe</name>
        <dbReference type="ChEBI" id="CHEBI:18248"/>
    </ligandPart>
</feature>
<feature type="binding site" description="axial binding residue" evidence="2">
    <location>
        <position position="121"/>
    </location>
    <ligand>
        <name>heme c</name>
        <dbReference type="ChEBI" id="CHEBI:61717"/>
    </ligand>
    <ligandPart>
        <name>Fe</name>
        <dbReference type="ChEBI" id="CHEBI:18248"/>
    </ligandPart>
</feature>
<feature type="modified residue" description="Pyrrolidone carboxylic acid" evidence="1">
    <location>
        <position position="22"/>
    </location>
</feature>
<feature type="sequence conflict" description="In Ref. 1; AAA26101." evidence="5" ref="1">
    <original>D</original>
    <variation>E</variation>
    <location>
        <position position="45"/>
    </location>
</feature>
<protein>
    <recommendedName>
        <fullName>Cytochrome c2</fullName>
        <shortName>Cyt c2</shortName>
    </recommendedName>
</protein>
<comment type="function">
    <text>Cytochrome c2 is found mainly in purple, non-sulfur, photosynthetic bacteria where it functions as the electron donor to the oxidized bacteriochlorophyll in the photophosphorylation pathway. However, it may also have a role in the respiratory chain and is found in some non-photosynthetic bacteria.</text>
</comment>
<comment type="subcellular location">
    <subcellularLocation>
        <location>Periplasm</location>
    </subcellularLocation>
</comment>
<comment type="PTM">
    <text evidence="1">Binds 1 heme c group covalently per subunit.</text>
</comment>
<comment type="similarity">
    <text evidence="5">Belongs to the cytochrome c family.</text>
</comment>
<name>CYC2_CERS4</name>
<sequence>MKFQVKALAAIAAFAALPALAQEGDPEAGAKAFNQCQTCHVIVDDSGTTIAGRNAKTGPNLYGVVGRTAGTQADFKGYGEGMKEAGAKGLAWDEEHFVQYVQDPTKFLKEYTGDAKAKGKMTFKLKKEADAHNIWAYLQQVAVRP</sequence>
<organism>
    <name type="scientific">Cereibacter sphaeroides (strain ATCC 17023 / DSM 158 / JCM 6121 / CCUG 31486 / LMG 2827 / NBRC 12203 / NCIMB 8253 / ATH 2.4.1.)</name>
    <name type="common">Rhodobacter sphaeroides</name>
    <dbReference type="NCBI Taxonomy" id="272943"/>
    <lineage>
        <taxon>Bacteria</taxon>
        <taxon>Pseudomonadati</taxon>
        <taxon>Pseudomonadota</taxon>
        <taxon>Alphaproteobacteria</taxon>
        <taxon>Rhodobacterales</taxon>
        <taxon>Paracoccaceae</taxon>
        <taxon>Cereibacter</taxon>
    </lineage>
</organism>
<evidence type="ECO:0000250" key="1"/>
<evidence type="ECO:0000255" key="2">
    <source>
        <dbReference type="PROSITE-ProRule" id="PRU00433"/>
    </source>
</evidence>
<evidence type="ECO:0000269" key="3">
    <source>
    </source>
</evidence>
<evidence type="ECO:0000269" key="4">
    <source ref="6"/>
</evidence>
<evidence type="ECO:0000305" key="5"/>
<reference key="1">
    <citation type="journal article" date="1986" name="J. Bacteriol.">
        <title>Cloning, DNA sequence, and expression of the Rhodobacter sphaeroides cytochrome c2 gene.</title>
        <authorList>
            <person name="Donohue T.J."/>
            <person name="McEwan A.G."/>
            <person name="Kaplan S."/>
        </authorList>
    </citation>
    <scope>NUCLEOTIDE SEQUENCE [GENOMIC DNA]</scope>
</reference>
<reference key="2">
    <citation type="journal article" date="1991" name="J. Bacteriol.">
        <title>Evidence for two promoters for the cytochrome c2 gene (cycA) of Rhodobacter sphaeroides.</title>
        <authorList>
            <person name="McGregor B.J."/>
            <person name="Donohue T.J."/>
        </authorList>
    </citation>
    <scope>NUCLEOTIDE SEQUENCE [GENOMIC DNA]</scope>
</reference>
<reference key="3">
    <citation type="journal article" date="2000" name="Nucleic Acids Res.">
        <title>DNA sequence analysis of the photosynthesis region of Rhodobacter sphaeroides 2.4.1.</title>
        <authorList>
            <person name="Choudhary M."/>
            <person name="Kaplan S."/>
        </authorList>
    </citation>
    <scope>NUCLEOTIDE SEQUENCE [GENOMIC DNA]</scope>
</reference>
<reference key="4">
    <citation type="submission" date="2005-09" db="EMBL/GenBank/DDBJ databases">
        <title>Complete sequence of chromosome 1 of Rhodobacter sphaeroides 2.4.1.</title>
        <authorList>
            <person name="Copeland A."/>
            <person name="Lucas S."/>
            <person name="Lapidus A."/>
            <person name="Barry K."/>
            <person name="Detter J.C."/>
            <person name="Glavina T."/>
            <person name="Hammon N."/>
            <person name="Israni S."/>
            <person name="Pitluck S."/>
            <person name="Richardson P."/>
            <person name="Mackenzie C."/>
            <person name="Choudhary M."/>
            <person name="Larimer F."/>
            <person name="Hauser L.J."/>
            <person name="Land M."/>
            <person name="Donohue T.J."/>
            <person name="Kaplan S."/>
        </authorList>
    </citation>
    <scope>NUCLEOTIDE SEQUENCE [LARGE SCALE GENOMIC DNA]</scope>
    <source>
        <strain>ATCC 17023 / DSM 158 / JCM 6121 / CCUG 31486 / LMG 2827 / NBRC 12203 / NCIMB 8253 / ATH 2.4.1.</strain>
    </source>
</reference>
<reference key="5">
    <citation type="journal article" date="1979" name="Nature">
        <title>Cytochrome c2 sequence variation among the recognised species of purple nonsulphur photosynthetic bacteria.</title>
        <authorList>
            <person name="Ambler R.P."/>
            <person name="Daniel M."/>
            <person name="Hermoso J."/>
            <person name="Meyer T.E."/>
            <person name="Bartsch R.G."/>
            <person name="Kamen M.D."/>
        </authorList>
    </citation>
    <scope>PROTEIN SEQUENCE OF 22-124</scope>
</reference>
<reference key="6">
    <citation type="submission" date="1974-07" db="PIR data bank">
        <authorList>
            <person name="Ambler R.P."/>
            <person name="Meyer T.E."/>
        </authorList>
    </citation>
    <scope>PROTEIN SEQUENCE OF 22-145</scope>
</reference>
<gene>
    <name type="primary">cycA</name>
    <name type="ordered locus">RHOS4_19020</name>
    <name type="ORF">RSP_0296</name>
</gene>
<accession>Q3J164</accession>
<accession>P00095</accession>
<accession>Q93V25</accession>
<proteinExistence type="evidence at protein level"/>